<evidence type="ECO:0000250" key="1"/>
<evidence type="ECO:0000255" key="2"/>
<evidence type="ECO:0000305" key="3"/>
<gene>
    <name type="primary">GOS11</name>
    <name type="ordered locus">At1g15880</name>
    <name type="ORF">F7H2.21</name>
</gene>
<comment type="function">
    <text evidence="1">Involved in transport from the ER to the Golgi apparatus as well as in intra-Golgi transport. It belongs to a super-family of proteins called t-SNAREs or soluble NSF (N-ethylmaleimide-sensitive factor) attachment protein receptor (By similarity).</text>
</comment>
<comment type="subunit">
    <text evidence="1">Component of several multiprotein Golgi SNARE complexes.</text>
</comment>
<comment type="subcellular location">
    <subcellularLocation>
        <location evidence="1">Golgi apparatus membrane</location>
        <topology evidence="1">Single-pass type IV membrane protein</topology>
    </subcellularLocation>
</comment>
<comment type="similarity">
    <text evidence="3">Belongs to the GOSR1 family.</text>
</comment>
<protein>
    <recommendedName>
        <fullName>Golgi SNAP receptor complex member 1-1</fullName>
    </recommendedName>
    <alternativeName>
        <fullName>Golgi SNARE 11 protein</fullName>
        <shortName>AtGOS11</shortName>
    </alternativeName>
</protein>
<proteinExistence type="evidence at transcript level"/>
<name>GOS11_ARATH</name>
<keyword id="KW-0175">Coiled coil</keyword>
<keyword id="KW-0931">ER-Golgi transport</keyword>
<keyword id="KW-0333">Golgi apparatus</keyword>
<keyword id="KW-0472">Membrane</keyword>
<keyword id="KW-0653">Protein transport</keyword>
<keyword id="KW-1185">Reference proteome</keyword>
<keyword id="KW-0812">Transmembrane</keyword>
<keyword id="KW-1133">Transmembrane helix</keyword>
<keyword id="KW-0813">Transport</keyword>
<reference key="1">
    <citation type="submission" date="2001-03" db="EMBL/GenBank/DDBJ databases">
        <title>Arabidopsis Golgi SNAREs.</title>
        <authorList>
            <person name="Sanderfoot A.A."/>
            <person name="Raikhel N.V."/>
        </authorList>
    </citation>
    <scope>NUCLEOTIDE SEQUENCE [MRNA]</scope>
</reference>
<reference key="2">
    <citation type="journal article" date="2000" name="Nature">
        <title>Sequence and analysis of chromosome 1 of the plant Arabidopsis thaliana.</title>
        <authorList>
            <person name="Theologis A."/>
            <person name="Ecker J.R."/>
            <person name="Palm C.J."/>
            <person name="Federspiel N.A."/>
            <person name="Kaul S."/>
            <person name="White O."/>
            <person name="Alonso J."/>
            <person name="Altafi H."/>
            <person name="Araujo R."/>
            <person name="Bowman C.L."/>
            <person name="Brooks S.Y."/>
            <person name="Buehler E."/>
            <person name="Chan A."/>
            <person name="Chao Q."/>
            <person name="Chen H."/>
            <person name="Cheuk R.F."/>
            <person name="Chin C.W."/>
            <person name="Chung M.K."/>
            <person name="Conn L."/>
            <person name="Conway A.B."/>
            <person name="Conway A.R."/>
            <person name="Creasy T.H."/>
            <person name="Dewar K."/>
            <person name="Dunn P."/>
            <person name="Etgu P."/>
            <person name="Feldblyum T.V."/>
            <person name="Feng J.-D."/>
            <person name="Fong B."/>
            <person name="Fujii C.Y."/>
            <person name="Gill J.E."/>
            <person name="Goldsmith A.D."/>
            <person name="Haas B."/>
            <person name="Hansen N.F."/>
            <person name="Hughes B."/>
            <person name="Huizar L."/>
            <person name="Hunter J.L."/>
            <person name="Jenkins J."/>
            <person name="Johnson-Hopson C."/>
            <person name="Khan S."/>
            <person name="Khaykin E."/>
            <person name="Kim C.J."/>
            <person name="Koo H.L."/>
            <person name="Kremenetskaia I."/>
            <person name="Kurtz D.B."/>
            <person name="Kwan A."/>
            <person name="Lam B."/>
            <person name="Langin-Hooper S."/>
            <person name="Lee A."/>
            <person name="Lee J.M."/>
            <person name="Lenz C.A."/>
            <person name="Li J.H."/>
            <person name="Li Y.-P."/>
            <person name="Lin X."/>
            <person name="Liu S.X."/>
            <person name="Liu Z.A."/>
            <person name="Luros J.S."/>
            <person name="Maiti R."/>
            <person name="Marziali A."/>
            <person name="Militscher J."/>
            <person name="Miranda M."/>
            <person name="Nguyen M."/>
            <person name="Nierman W.C."/>
            <person name="Osborne B.I."/>
            <person name="Pai G."/>
            <person name="Peterson J."/>
            <person name="Pham P.K."/>
            <person name="Rizzo M."/>
            <person name="Rooney T."/>
            <person name="Rowley D."/>
            <person name="Sakano H."/>
            <person name="Salzberg S.L."/>
            <person name="Schwartz J.R."/>
            <person name="Shinn P."/>
            <person name="Southwick A.M."/>
            <person name="Sun H."/>
            <person name="Tallon L.J."/>
            <person name="Tambunga G."/>
            <person name="Toriumi M.J."/>
            <person name="Town C.D."/>
            <person name="Utterback T."/>
            <person name="Van Aken S."/>
            <person name="Vaysberg M."/>
            <person name="Vysotskaia V.S."/>
            <person name="Walker M."/>
            <person name="Wu D."/>
            <person name="Yu G."/>
            <person name="Fraser C.M."/>
            <person name="Venter J.C."/>
            <person name="Davis R.W."/>
        </authorList>
    </citation>
    <scope>NUCLEOTIDE SEQUENCE [LARGE SCALE GENOMIC DNA]</scope>
    <source>
        <strain>cv. Columbia</strain>
    </source>
</reference>
<reference key="3">
    <citation type="journal article" date="2017" name="Plant J.">
        <title>Araport11: a complete reannotation of the Arabidopsis thaliana reference genome.</title>
        <authorList>
            <person name="Cheng C.Y."/>
            <person name="Krishnakumar V."/>
            <person name="Chan A.P."/>
            <person name="Thibaud-Nissen F."/>
            <person name="Schobel S."/>
            <person name="Town C.D."/>
        </authorList>
    </citation>
    <scope>GENOME REANNOTATION</scope>
    <source>
        <strain>cv. Columbia</strain>
    </source>
</reference>
<reference key="4">
    <citation type="journal article" date="2003" name="Science">
        <title>Empirical analysis of transcriptional activity in the Arabidopsis genome.</title>
        <authorList>
            <person name="Yamada K."/>
            <person name="Lim J."/>
            <person name="Dale J.M."/>
            <person name="Chen H."/>
            <person name="Shinn P."/>
            <person name="Palm C.J."/>
            <person name="Southwick A.M."/>
            <person name="Wu H.C."/>
            <person name="Kim C.J."/>
            <person name="Nguyen M."/>
            <person name="Pham P.K."/>
            <person name="Cheuk R.F."/>
            <person name="Karlin-Newmann G."/>
            <person name="Liu S.X."/>
            <person name="Lam B."/>
            <person name="Sakano H."/>
            <person name="Wu T."/>
            <person name="Yu G."/>
            <person name="Miranda M."/>
            <person name="Quach H.L."/>
            <person name="Tripp M."/>
            <person name="Chang C.H."/>
            <person name="Lee J.M."/>
            <person name="Toriumi M.J."/>
            <person name="Chan M.M."/>
            <person name="Tang C.C."/>
            <person name="Onodera C.S."/>
            <person name="Deng J.M."/>
            <person name="Akiyama K."/>
            <person name="Ansari Y."/>
            <person name="Arakawa T."/>
            <person name="Banh J."/>
            <person name="Banno F."/>
            <person name="Bowser L."/>
            <person name="Brooks S.Y."/>
            <person name="Carninci P."/>
            <person name="Chao Q."/>
            <person name="Choy N."/>
            <person name="Enju A."/>
            <person name="Goldsmith A.D."/>
            <person name="Gurjal M."/>
            <person name="Hansen N.F."/>
            <person name="Hayashizaki Y."/>
            <person name="Johnson-Hopson C."/>
            <person name="Hsuan V.W."/>
            <person name="Iida K."/>
            <person name="Karnes M."/>
            <person name="Khan S."/>
            <person name="Koesema E."/>
            <person name="Ishida J."/>
            <person name="Jiang P.X."/>
            <person name="Jones T."/>
            <person name="Kawai J."/>
            <person name="Kamiya A."/>
            <person name="Meyers C."/>
            <person name="Nakajima M."/>
            <person name="Narusaka M."/>
            <person name="Seki M."/>
            <person name="Sakurai T."/>
            <person name="Satou M."/>
            <person name="Tamse R."/>
            <person name="Vaysberg M."/>
            <person name="Wallender E.K."/>
            <person name="Wong C."/>
            <person name="Yamamura Y."/>
            <person name="Yuan S."/>
            <person name="Shinozaki K."/>
            <person name="Davis R.W."/>
            <person name="Theologis A."/>
            <person name="Ecker J.R."/>
        </authorList>
    </citation>
    <scope>NUCLEOTIDE SEQUENCE [LARGE SCALE MRNA]</scope>
    <source>
        <strain>cv. Columbia</strain>
    </source>
</reference>
<dbReference type="EMBL" id="AF357528">
    <property type="protein sequence ID" value="AAK48904.1"/>
    <property type="molecule type" value="mRNA"/>
</dbReference>
<dbReference type="EMBL" id="AC034256">
    <property type="protein sequence ID" value="AAF82157.1"/>
    <property type="molecule type" value="Genomic_DNA"/>
</dbReference>
<dbReference type="EMBL" id="CP002684">
    <property type="protein sequence ID" value="AEE29378.1"/>
    <property type="molecule type" value="Genomic_DNA"/>
</dbReference>
<dbReference type="EMBL" id="AF332426">
    <property type="protein sequence ID" value="AAG48789.1"/>
    <property type="molecule type" value="mRNA"/>
</dbReference>
<dbReference type="EMBL" id="AF410263">
    <property type="protein sequence ID" value="AAK95249.1"/>
    <property type="molecule type" value="mRNA"/>
</dbReference>
<dbReference type="EMBL" id="AY093723">
    <property type="protein sequence ID" value="AAM10347.1"/>
    <property type="molecule type" value="mRNA"/>
</dbReference>
<dbReference type="PIR" id="C86293">
    <property type="entry name" value="C86293"/>
</dbReference>
<dbReference type="RefSeq" id="NP_563985.1">
    <property type="nucleotide sequence ID" value="NM_101456.4"/>
</dbReference>
<dbReference type="SMR" id="Q9LMP7"/>
<dbReference type="BioGRID" id="23398">
    <property type="interactions" value="5"/>
</dbReference>
<dbReference type="FunCoup" id="Q9LMP7">
    <property type="interactions" value="756"/>
</dbReference>
<dbReference type="IntAct" id="Q9LMP7">
    <property type="interactions" value="6"/>
</dbReference>
<dbReference type="STRING" id="3702.Q9LMP7"/>
<dbReference type="iPTMnet" id="Q9LMP7"/>
<dbReference type="PaxDb" id="3702-AT1G15880.1"/>
<dbReference type="ProteomicsDB" id="247022"/>
<dbReference type="EnsemblPlants" id="AT1G15880.1">
    <property type="protein sequence ID" value="AT1G15880.1"/>
    <property type="gene ID" value="AT1G15880"/>
</dbReference>
<dbReference type="GeneID" id="838158"/>
<dbReference type="Gramene" id="AT1G15880.1">
    <property type="protein sequence ID" value="AT1G15880.1"/>
    <property type="gene ID" value="AT1G15880"/>
</dbReference>
<dbReference type="KEGG" id="ath:AT1G15880"/>
<dbReference type="Araport" id="AT1G15880"/>
<dbReference type="TAIR" id="AT1G15880">
    <property type="gene designation" value="GOS11"/>
</dbReference>
<dbReference type="eggNOG" id="KOG3208">
    <property type="taxonomic scope" value="Eukaryota"/>
</dbReference>
<dbReference type="HOGENOM" id="CLU_078034_2_1_1"/>
<dbReference type="InParanoid" id="Q9LMP7"/>
<dbReference type="OMA" id="EILRDYC"/>
<dbReference type="PhylomeDB" id="Q9LMP7"/>
<dbReference type="PRO" id="PR:Q9LMP7"/>
<dbReference type="Proteomes" id="UP000006548">
    <property type="component" value="Chromosome 1"/>
</dbReference>
<dbReference type="ExpressionAtlas" id="Q9LMP7">
    <property type="expression patterns" value="baseline and differential"/>
</dbReference>
<dbReference type="GO" id="GO:0005801">
    <property type="term" value="C:cis-Golgi network"/>
    <property type="evidence" value="ECO:0007669"/>
    <property type="project" value="InterPro"/>
</dbReference>
<dbReference type="GO" id="GO:0005794">
    <property type="term" value="C:Golgi apparatus"/>
    <property type="evidence" value="ECO:0007005"/>
    <property type="project" value="TAIR"/>
</dbReference>
<dbReference type="GO" id="GO:0000139">
    <property type="term" value="C:Golgi membrane"/>
    <property type="evidence" value="ECO:0007669"/>
    <property type="project" value="UniProtKB-SubCell"/>
</dbReference>
<dbReference type="GO" id="GO:0006888">
    <property type="term" value="P:endoplasmic reticulum to Golgi vesicle-mediated transport"/>
    <property type="evidence" value="ECO:0007669"/>
    <property type="project" value="InterPro"/>
</dbReference>
<dbReference type="GO" id="GO:0015031">
    <property type="term" value="P:protein transport"/>
    <property type="evidence" value="ECO:0007669"/>
    <property type="project" value="UniProtKB-KW"/>
</dbReference>
<dbReference type="InterPro" id="IPR023601">
    <property type="entry name" value="Golgi_SNAP_su1"/>
</dbReference>
<dbReference type="PANTHER" id="PTHR21094:SF0">
    <property type="entry name" value="GOLGI SNAP RECEPTOR COMPLEX MEMBER 1-1"/>
    <property type="match status" value="1"/>
</dbReference>
<dbReference type="PANTHER" id="PTHR21094">
    <property type="entry name" value="GOS-28 SNARE- RELATED"/>
    <property type="match status" value="1"/>
</dbReference>
<dbReference type="Pfam" id="PF12352">
    <property type="entry name" value="V-SNARE_C"/>
    <property type="match status" value="1"/>
</dbReference>
<dbReference type="PIRSF" id="PIRSF027109">
    <property type="entry name" value="Golgi_SNARE"/>
    <property type="match status" value="1"/>
</dbReference>
<organism>
    <name type="scientific">Arabidopsis thaliana</name>
    <name type="common">Mouse-ear cress</name>
    <dbReference type="NCBI Taxonomy" id="3702"/>
    <lineage>
        <taxon>Eukaryota</taxon>
        <taxon>Viridiplantae</taxon>
        <taxon>Streptophyta</taxon>
        <taxon>Embryophyta</taxon>
        <taxon>Tracheophyta</taxon>
        <taxon>Spermatophyta</taxon>
        <taxon>Magnoliopsida</taxon>
        <taxon>eudicotyledons</taxon>
        <taxon>Gunneridae</taxon>
        <taxon>Pentapetalae</taxon>
        <taxon>rosids</taxon>
        <taxon>malvids</taxon>
        <taxon>Brassicales</taxon>
        <taxon>Brassicaceae</taxon>
        <taxon>Camelineae</taxon>
        <taxon>Arabidopsis</taxon>
    </lineage>
</organism>
<accession>Q9LMP7</accession>
<feature type="chain" id="PRO_0000212547" description="Golgi SNAP receptor complex member 1-1">
    <location>
        <begin position="1"/>
        <end position="223"/>
    </location>
</feature>
<feature type="topological domain" description="Cytoplasmic" evidence="2">
    <location>
        <begin position="1"/>
        <end position="201"/>
    </location>
</feature>
<feature type="transmembrane region" description="Helical; Anchor for type IV membrane protein" evidence="2">
    <location>
        <begin position="202"/>
        <end position="222"/>
    </location>
</feature>
<feature type="topological domain" description="Vesicular" evidence="2">
    <location>
        <position position="223"/>
    </location>
</feature>
<feature type="coiled-coil region" evidence="2">
    <location>
        <begin position="8"/>
        <end position="67"/>
    </location>
</feature>
<sequence length="223" mass="25214">MDVPSSWDALRKQARKIEAQLDEQMHSYRRLVSTKALSKSDGNESDLEAGIDLLLRQLQQVNAQMQAWVSSGGSEMVSHTLTRHQEILQDLTQEFYRHRSSLRAKQEHASLLEDFREFDRTRLDLEDGYGSEQALIKEHMGINRNTAQMDGVISQAQATLGTLVFQRSTFGGINSKLSNVASRLPTVNTILAAIKRKKSMDTIILSLVAAVCTFLIFIYWITK</sequence>